<sequence>MLSWKNDLTPVSDRFDDIYFSPENGLEETRHVFIGGNDLPDRWRNSNIQNPFCILELGFGTGLNFFATWKEYLKQDNRFRLHFISVEKFPLSRKEISKAVSAFPELEEIKEEFLSSYQDLIPGMNYFRFLEGKIHLTLFLGDVSDALCEISGKADAIFLDGFAPSKNPEMWEESVLGNLKNVSKFGTTFSTFTVARTVRNSLSYAGFTLEKRPGFGKKREMLTGKYSNYPSETKESLPKEKPWCKRSDPESQIKTATIIGAGIAGSTLAYSLSKRGIQVFLIDPSGIANETSGIPRAISHPHLTKIPGPISLFTLRAFRYALSFLSSFADKDQFGKVGSFHGVTAEMNPERFRKSIENHKLTEEIASWKPNGSDFHKNDPFNKELEEGVLFRNGFWTRPGSIARKCVDQPGIELIQATANSFERIGSSWKLDLKESDQKVLADSIIFCNSYLIGKLASSLFEGEEIFPINKVRGQLISLKETENSSRVPNILCAEHYLTPSVQGEHVLGSTFDEFDLNPKPRKKDTDLLLQYVQTKYPTLRFDSNCVLSEKTGFRAQTPDRFPIIGPIFDPKIFQETYKEIDLPRNRNKKFPNLKVIPGLYVFGGLGSRGILSSFLGAEILASLILGEPAPVEFSLLESLHPARFLYRRIRK</sequence>
<proteinExistence type="inferred from homology"/>
<organism>
    <name type="scientific">Leptospira borgpetersenii serovar Hardjo-bovis (strain JB197)</name>
    <dbReference type="NCBI Taxonomy" id="355277"/>
    <lineage>
        <taxon>Bacteria</taxon>
        <taxon>Pseudomonadati</taxon>
        <taxon>Spirochaetota</taxon>
        <taxon>Spirochaetia</taxon>
        <taxon>Leptospirales</taxon>
        <taxon>Leptospiraceae</taxon>
        <taxon>Leptospira</taxon>
    </lineage>
</organism>
<reference key="1">
    <citation type="journal article" date="2006" name="Proc. Natl. Acad. Sci. U.S.A.">
        <title>Genome reduction in Leptospira borgpetersenii reflects limited transmission potential.</title>
        <authorList>
            <person name="Bulach D.M."/>
            <person name="Zuerner R.L."/>
            <person name="Wilson P."/>
            <person name="Seemann T."/>
            <person name="McGrath A."/>
            <person name="Cullen P.A."/>
            <person name="Davis J."/>
            <person name="Johnson M."/>
            <person name="Kuczek E."/>
            <person name="Alt D.P."/>
            <person name="Peterson-Burch B."/>
            <person name="Coppel R.L."/>
            <person name="Rood J.I."/>
            <person name="Davies J.K."/>
            <person name="Adler B."/>
        </authorList>
    </citation>
    <scope>NUCLEOTIDE SEQUENCE [LARGE SCALE GENOMIC DNA]</scope>
    <source>
        <strain>JB197</strain>
    </source>
</reference>
<keyword id="KW-0963">Cytoplasm</keyword>
<keyword id="KW-0274">FAD</keyword>
<keyword id="KW-0285">Flavoprotein</keyword>
<keyword id="KW-0489">Methyltransferase</keyword>
<keyword id="KW-0511">Multifunctional enzyme</keyword>
<keyword id="KW-0560">Oxidoreductase</keyword>
<keyword id="KW-0949">S-adenosyl-L-methionine</keyword>
<keyword id="KW-0808">Transferase</keyword>
<keyword id="KW-0819">tRNA processing</keyword>
<dbReference type="EC" id="2.1.1.61" evidence="1"/>
<dbReference type="EC" id="1.5.-.-" evidence="1"/>
<dbReference type="EMBL" id="CP000350">
    <property type="protein sequence ID" value="ABJ75025.1"/>
    <property type="molecule type" value="Genomic_DNA"/>
</dbReference>
<dbReference type="RefSeq" id="WP_011671043.1">
    <property type="nucleotide sequence ID" value="NC_008510.1"/>
</dbReference>
<dbReference type="SMR" id="Q04VP5"/>
<dbReference type="KEGG" id="lbj:LBJ_0297"/>
<dbReference type="HOGENOM" id="CLU_022427_1_0_12"/>
<dbReference type="Proteomes" id="UP000000656">
    <property type="component" value="Chromosome 1"/>
</dbReference>
<dbReference type="GO" id="GO:0005737">
    <property type="term" value="C:cytoplasm"/>
    <property type="evidence" value="ECO:0007669"/>
    <property type="project" value="UniProtKB-SubCell"/>
</dbReference>
<dbReference type="GO" id="GO:0050660">
    <property type="term" value="F:flavin adenine dinucleotide binding"/>
    <property type="evidence" value="ECO:0007669"/>
    <property type="project" value="UniProtKB-UniRule"/>
</dbReference>
<dbReference type="GO" id="GO:0016645">
    <property type="term" value="F:oxidoreductase activity, acting on the CH-NH group of donors"/>
    <property type="evidence" value="ECO:0007669"/>
    <property type="project" value="InterPro"/>
</dbReference>
<dbReference type="GO" id="GO:0004808">
    <property type="term" value="F:tRNA (5-methylaminomethyl-2-thiouridylate)(34)-methyltransferase activity"/>
    <property type="evidence" value="ECO:0007669"/>
    <property type="project" value="UniProtKB-EC"/>
</dbReference>
<dbReference type="GO" id="GO:0032259">
    <property type="term" value="P:methylation"/>
    <property type="evidence" value="ECO:0007669"/>
    <property type="project" value="UniProtKB-KW"/>
</dbReference>
<dbReference type="GO" id="GO:0002097">
    <property type="term" value="P:tRNA wobble base modification"/>
    <property type="evidence" value="ECO:0007669"/>
    <property type="project" value="UniProtKB-UniRule"/>
</dbReference>
<dbReference type="Gene3D" id="3.30.9.10">
    <property type="entry name" value="D-Amino Acid Oxidase, subunit A, domain 2"/>
    <property type="match status" value="1"/>
</dbReference>
<dbReference type="Gene3D" id="3.50.50.60">
    <property type="entry name" value="FAD/NAD(P)-binding domain"/>
    <property type="match status" value="1"/>
</dbReference>
<dbReference type="Gene3D" id="3.40.50.150">
    <property type="entry name" value="Vaccinia Virus protein VP39"/>
    <property type="match status" value="1"/>
</dbReference>
<dbReference type="HAMAP" id="MF_01102">
    <property type="entry name" value="MnmC"/>
    <property type="match status" value="1"/>
</dbReference>
<dbReference type="InterPro" id="IPR006076">
    <property type="entry name" value="FAD-dep_OxRdtase"/>
</dbReference>
<dbReference type="InterPro" id="IPR036188">
    <property type="entry name" value="FAD/NAD-bd_sf"/>
</dbReference>
<dbReference type="InterPro" id="IPR008471">
    <property type="entry name" value="MnmC-like_methylTransf"/>
</dbReference>
<dbReference type="InterPro" id="IPR029063">
    <property type="entry name" value="SAM-dependent_MTases_sf"/>
</dbReference>
<dbReference type="InterPro" id="IPR023032">
    <property type="entry name" value="tRNA_MAMT_biosynth_bifunc_MnmC"/>
</dbReference>
<dbReference type="InterPro" id="IPR047785">
    <property type="entry name" value="tRNA_MNMC2"/>
</dbReference>
<dbReference type="InterPro" id="IPR017610">
    <property type="entry name" value="tRNA_S-uridine_synth_MnmC_C"/>
</dbReference>
<dbReference type="NCBIfam" id="TIGR03197">
    <property type="entry name" value="MnmC_Cterm"/>
    <property type="match status" value="1"/>
</dbReference>
<dbReference type="NCBIfam" id="NF002481">
    <property type="entry name" value="PRK01747.1-2"/>
    <property type="match status" value="1"/>
</dbReference>
<dbReference type="NCBIfam" id="NF033855">
    <property type="entry name" value="tRNA_MNMC2"/>
    <property type="match status" value="1"/>
</dbReference>
<dbReference type="PANTHER" id="PTHR13847">
    <property type="entry name" value="SARCOSINE DEHYDROGENASE-RELATED"/>
    <property type="match status" value="1"/>
</dbReference>
<dbReference type="PANTHER" id="PTHR13847:SF283">
    <property type="entry name" value="TRNA 5-METHYLAMINOMETHYL-2-THIOURIDINE BIOSYNTHESIS BIFUNCTIONAL PROTEIN MNMC"/>
    <property type="match status" value="1"/>
</dbReference>
<dbReference type="Pfam" id="PF01266">
    <property type="entry name" value="DAO"/>
    <property type="match status" value="1"/>
</dbReference>
<dbReference type="Pfam" id="PF05430">
    <property type="entry name" value="Methyltransf_30"/>
    <property type="match status" value="1"/>
</dbReference>
<dbReference type="SUPFAM" id="SSF54373">
    <property type="entry name" value="FAD-linked reductases, C-terminal domain"/>
    <property type="match status" value="1"/>
</dbReference>
<dbReference type="SUPFAM" id="SSF51905">
    <property type="entry name" value="FAD/NAD(P)-binding domain"/>
    <property type="match status" value="1"/>
</dbReference>
<protein>
    <recommendedName>
        <fullName evidence="1">tRNA 5-methylaminomethyl-2-thiouridine biosynthesis bifunctional protein MnmC</fullName>
        <shortName evidence="1">tRNA mnm(5)s(2)U biosynthesis bifunctional protein</shortName>
    </recommendedName>
    <domain>
        <recommendedName>
            <fullName evidence="1">tRNA (mnm(5)s(2)U34)-methyltransferase</fullName>
            <ecNumber evidence="1">2.1.1.61</ecNumber>
        </recommendedName>
    </domain>
    <domain>
        <recommendedName>
            <fullName evidence="1">FAD-dependent cmnm(5)s(2)U34 oxidoreductase</fullName>
            <ecNumber evidence="1">1.5.-.-</ecNumber>
        </recommendedName>
    </domain>
</protein>
<comment type="function">
    <text evidence="1">Catalyzes the last two steps in the biosynthesis of 5-methylaminomethyl-2-thiouridine (mnm(5)s(2)U) at the wobble position (U34) in tRNA. Catalyzes the FAD-dependent demodification of cmnm(5)s(2)U34 to nm(5)s(2)U34, followed by the transfer of a methyl group from S-adenosyl-L-methionine to nm(5)s(2)U34, to form mnm(5)s(2)U34.</text>
</comment>
<comment type="catalytic activity">
    <reaction evidence="1">
        <text>5-aminomethyl-2-thiouridine(34) in tRNA + S-adenosyl-L-methionine = 5-methylaminomethyl-2-thiouridine(34) in tRNA + S-adenosyl-L-homocysteine + H(+)</text>
        <dbReference type="Rhea" id="RHEA:19569"/>
        <dbReference type="Rhea" id="RHEA-COMP:10195"/>
        <dbReference type="Rhea" id="RHEA-COMP:10197"/>
        <dbReference type="ChEBI" id="CHEBI:15378"/>
        <dbReference type="ChEBI" id="CHEBI:57856"/>
        <dbReference type="ChEBI" id="CHEBI:59789"/>
        <dbReference type="ChEBI" id="CHEBI:74454"/>
        <dbReference type="ChEBI" id="CHEBI:74455"/>
        <dbReference type="EC" id="2.1.1.61"/>
    </reaction>
</comment>
<comment type="cofactor">
    <cofactor evidence="1">
        <name>FAD</name>
        <dbReference type="ChEBI" id="CHEBI:57692"/>
    </cofactor>
</comment>
<comment type="subcellular location">
    <subcellularLocation>
        <location evidence="1">Cytoplasm</location>
    </subcellularLocation>
</comment>
<comment type="similarity">
    <text evidence="1">In the N-terminal section; belongs to the methyltransferase superfamily. tRNA (mnm(5)s(2)U34)-methyltransferase family.</text>
</comment>
<comment type="similarity">
    <text evidence="1">In the C-terminal section; belongs to the DAO family.</text>
</comment>
<gene>
    <name evidence="1" type="primary">mnmC</name>
    <name type="ordered locus">LBJ_0297</name>
</gene>
<feature type="chain" id="PRO_0000347994" description="tRNA 5-methylaminomethyl-2-thiouridine biosynthesis bifunctional protein MnmC">
    <location>
        <begin position="1"/>
        <end position="652"/>
    </location>
</feature>
<feature type="region of interest" description="tRNA (mnm(5)s(2)U34)-methyltransferase">
    <location>
        <begin position="1"/>
        <end position="227"/>
    </location>
</feature>
<feature type="region of interest" description="FAD-dependent cmnm(5)s(2)U34 oxidoreductase">
    <location>
        <begin position="259"/>
        <end position="652"/>
    </location>
</feature>
<accession>Q04VP5</accession>
<name>MNMC_LEPBJ</name>
<evidence type="ECO:0000255" key="1">
    <source>
        <dbReference type="HAMAP-Rule" id="MF_01102"/>
    </source>
</evidence>